<accession>Q3KLV9</accession>
<organism>
    <name type="scientific">Chlamydia trachomatis serovar A (strain ATCC VR-571B / DSM 19440 / HAR-13)</name>
    <dbReference type="NCBI Taxonomy" id="315277"/>
    <lineage>
        <taxon>Bacteria</taxon>
        <taxon>Pseudomonadati</taxon>
        <taxon>Chlamydiota</taxon>
        <taxon>Chlamydiia</taxon>
        <taxon>Chlamydiales</taxon>
        <taxon>Chlamydiaceae</taxon>
        <taxon>Chlamydia/Chlamydophila group</taxon>
        <taxon>Chlamydia</taxon>
    </lineage>
</organism>
<comment type="function">
    <text evidence="1">Negative regulator of class I heat shock genes (grpE-dnaK-dnaJ and groELS operons). Prevents heat-shock induction of these operons.</text>
</comment>
<comment type="similarity">
    <text evidence="1">Belongs to the HrcA family.</text>
</comment>
<proteinExistence type="inferred from homology"/>
<evidence type="ECO:0000255" key="1">
    <source>
        <dbReference type="HAMAP-Rule" id="MF_00081"/>
    </source>
</evidence>
<dbReference type="EMBL" id="CP000051">
    <property type="protein sequence ID" value="AAX50663.1"/>
    <property type="molecule type" value="Genomic_DNA"/>
</dbReference>
<dbReference type="RefSeq" id="WP_011324720.1">
    <property type="nucleotide sequence ID" value="NC_007429.1"/>
</dbReference>
<dbReference type="SMR" id="Q3KLV9"/>
<dbReference type="KEGG" id="cta:CTA_0429"/>
<dbReference type="HOGENOM" id="CLU_050019_1_0_0"/>
<dbReference type="Proteomes" id="UP000002532">
    <property type="component" value="Chromosome"/>
</dbReference>
<dbReference type="GO" id="GO:0003677">
    <property type="term" value="F:DNA binding"/>
    <property type="evidence" value="ECO:0007669"/>
    <property type="project" value="InterPro"/>
</dbReference>
<dbReference type="GO" id="GO:0045892">
    <property type="term" value="P:negative regulation of DNA-templated transcription"/>
    <property type="evidence" value="ECO:0007669"/>
    <property type="project" value="UniProtKB-UniRule"/>
</dbReference>
<dbReference type="FunFam" id="1.10.10.10:FF:000785">
    <property type="entry name" value="Heat-inducible transcription repressor HrcA"/>
    <property type="match status" value="1"/>
</dbReference>
<dbReference type="Gene3D" id="3.30.450.40">
    <property type="match status" value="1"/>
</dbReference>
<dbReference type="Gene3D" id="1.10.10.10">
    <property type="entry name" value="Winged helix-like DNA-binding domain superfamily/Winged helix DNA-binding domain"/>
    <property type="match status" value="1"/>
</dbReference>
<dbReference type="HAMAP" id="MF_00081">
    <property type="entry name" value="HrcA"/>
    <property type="match status" value="1"/>
</dbReference>
<dbReference type="InterPro" id="IPR029016">
    <property type="entry name" value="GAF-like_dom_sf"/>
</dbReference>
<dbReference type="InterPro" id="IPR002571">
    <property type="entry name" value="HrcA"/>
</dbReference>
<dbReference type="InterPro" id="IPR021153">
    <property type="entry name" value="HrcA_C"/>
</dbReference>
<dbReference type="InterPro" id="IPR036388">
    <property type="entry name" value="WH-like_DNA-bd_sf"/>
</dbReference>
<dbReference type="InterPro" id="IPR036390">
    <property type="entry name" value="WH_DNA-bd_sf"/>
</dbReference>
<dbReference type="NCBIfam" id="TIGR00331">
    <property type="entry name" value="hrcA"/>
    <property type="match status" value="1"/>
</dbReference>
<dbReference type="PANTHER" id="PTHR34824">
    <property type="entry name" value="HEAT-INDUCIBLE TRANSCRIPTION REPRESSOR HRCA"/>
    <property type="match status" value="1"/>
</dbReference>
<dbReference type="PANTHER" id="PTHR34824:SF1">
    <property type="entry name" value="HEAT-INDUCIBLE TRANSCRIPTION REPRESSOR HRCA"/>
    <property type="match status" value="1"/>
</dbReference>
<dbReference type="Pfam" id="PF01628">
    <property type="entry name" value="HrcA"/>
    <property type="match status" value="1"/>
</dbReference>
<dbReference type="PIRSF" id="PIRSF005485">
    <property type="entry name" value="HrcA"/>
    <property type="match status" value="1"/>
</dbReference>
<dbReference type="SUPFAM" id="SSF55781">
    <property type="entry name" value="GAF domain-like"/>
    <property type="match status" value="1"/>
</dbReference>
<dbReference type="SUPFAM" id="SSF46785">
    <property type="entry name" value="Winged helix' DNA-binding domain"/>
    <property type="match status" value="1"/>
</dbReference>
<keyword id="KW-0678">Repressor</keyword>
<keyword id="KW-0346">Stress response</keyword>
<keyword id="KW-0804">Transcription</keyword>
<keyword id="KW-0805">Transcription regulation</keyword>
<gene>
    <name evidence="1" type="primary">hrcA</name>
    <name type="ordered locus">CTA_0429</name>
</gene>
<name>HRCA_CHLTA</name>
<feature type="chain" id="PRO_1000010396" description="Heat-inducible transcription repressor HrcA">
    <location>
        <begin position="1"/>
        <end position="392"/>
    </location>
</feature>
<protein>
    <recommendedName>
        <fullName evidence="1">Heat-inducible transcription repressor HrcA</fullName>
    </recommendedName>
</protein>
<sequence length="392" mass="44928">MENRIEMSQLRASKKDSKISYVLLMATKLYLESSQPVGSKLLKETYCSDLSSATIRNYFAQLETDGFLRKNHISGGRIPTDLAFRYYVDHNVPFLEQEEILAIQQKLTELPEYSKNIVKDLQKASEVLSDILQLPVCFSSPRFESDSVINIQLVAIDDQRVVFVLSTEFGQVFTDVLWLPEQLPENSLKRIEGFLQNYLRKQPSDGLLSQKEEDLGMVLYNEVVVRYLTRYCHFSEEDLYQTGLSRLLKYGTFKEPETLAQGLAFFENRKHMCQLLNTYLHKETPTAFIGRELADIVGNTDPSCAVITIPYYMDHTPLGAFGVLGPMNLPYQQVFGTLSLFTERLKVILTQSFYKFKLSFRRPCPTDPRCSQRPAELTRSSSIKLLPAKELS</sequence>
<reference key="1">
    <citation type="journal article" date="2005" name="Infect. Immun.">
        <title>Comparative genomic analysis of Chlamydia trachomatis oculotropic and genitotropic strains.</title>
        <authorList>
            <person name="Carlson J.H."/>
            <person name="Porcella S.F."/>
            <person name="McClarty G."/>
            <person name="Caldwell H.D."/>
        </authorList>
    </citation>
    <scope>NUCLEOTIDE SEQUENCE [LARGE SCALE GENOMIC DNA]</scope>
    <source>
        <strain>ATCC VR-571B / DSM 19440 / HAR-13</strain>
    </source>
</reference>